<protein>
    <recommendedName>
        <fullName evidence="1">Large ribosomal subunit protein uL14</fullName>
    </recommendedName>
    <alternativeName>
        <fullName evidence="2">50S ribosomal protein L14</fullName>
    </alternativeName>
</protein>
<organism>
    <name type="scientific">Acidiphilium cryptum (strain JF-5)</name>
    <dbReference type="NCBI Taxonomy" id="349163"/>
    <lineage>
        <taxon>Bacteria</taxon>
        <taxon>Pseudomonadati</taxon>
        <taxon>Pseudomonadota</taxon>
        <taxon>Alphaproteobacteria</taxon>
        <taxon>Acetobacterales</taxon>
        <taxon>Acidocellaceae</taxon>
        <taxon>Acidiphilium</taxon>
    </lineage>
</organism>
<keyword id="KW-1185">Reference proteome</keyword>
<keyword id="KW-0687">Ribonucleoprotein</keyword>
<keyword id="KW-0689">Ribosomal protein</keyword>
<keyword id="KW-0694">RNA-binding</keyword>
<keyword id="KW-0699">rRNA-binding</keyword>
<gene>
    <name evidence="1" type="primary">rplN</name>
    <name type="ordered locus">Acry_1936</name>
</gene>
<accession>A5FZV5</accession>
<comment type="function">
    <text evidence="1">Binds to 23S rRNA. Forms part of two intersubunit bridges in the 70S ribosome.</text>
</comment>
<comment type="subunit">
    <text evidence="1">Part of the 50S ribosomal subunit. Forms a cluster with proteins L3 and L19. In the 70S ribosome, L14 and L19 interact and together make contacts with the 16S rRNA in bridges B5 and B8.</text>
</comment>
<comment type="similarity">
    <text evidence="1">Belongs to the universal ribosomal protein uL14 family.</text>
</comment>
<evidence type="ECO:0000255" key="1">
    <source>
        <dbReference type="HAMAP-Rule" id="MF_01367"/>
    </source>
</evidence>
<evidence type="ECO:0000305" key="2"/>
<sequence>MIIVESNLDVADNSGARRVQCIKVLGGSKRRTASVGDVIVVSIKDAIPRGKVKKGDVHQAVVVRTAYPVRRADGSVIRFDRNAAVLINKQMEPIGTRIFGPVTRELRARKFMKIISLAPEVL</sequence>
<name>RL14_ACICJ</name>
<reference key="1">
    <citation type="submission" date="2007-05" db="EMBL/GenBank/DDBJ databases">
        <title>Complete sequence of chromosome of Acidiphilium cryptum JF-5.</title>
        <authorList>
            <consortium name="US DOE Joint Genome Institute"/>
            <person name="Copeland A."/>
            <person name="Lucas S."/>
            <person name="Lapidus A."/>
            <person name="Barry K."/>
            <person name="Detter J.C."/>
            <person name="Glavina del Rio T."/>
            <person name="Hammon N."/>
            <person name="Israni S."/>
            <person name="Dalin E."/>
            <person name="Tice H."/>
            <person name="Pitluck S."/>
            <person name="Sims D."/>
            <person name="Brettin T."/>
            <person name="Bruce D."/>
            <person name="Han C."/>
            <person name="Schmutz J."/>
            <person name="Larimer F."/>
            <person name="Land M."/>
            <person name="Hauser L."/>
            <person name="Kyrpides N."/>
            <person name="Kim E."/>
            <person name="Magnuson T."/>
            <person name="Richardson P."/>
        </authorList>
    </citation>
    <scope>NUCLEOTIDE SEQUENCE [LARGE SCALE GENOMIC DNA]</scope>
    <source>
        <strain>JF-5</strain>
    </source>
</reference>
<dbReference type="EMBL" id="CP000697">
    <property type="protein sequence ID" value="ABQ31137.1"/>
    <property type="molecule type" value="Genomic_DNA"/>
</dbReference>
<dbReference type="RefSeq" id="WP_007424183.1">
    <property type="nucleotide sequence ID" value="NC_009484.1"/>
</dbReference>
<dbReference type="SMR" id="A5FZV5"/>
<dbReference type="STRING" id="349163.Acry_1936"/>
<dbReference type="KEGG" id="acr:Acry_1936"/>
<dbReference type="eggNOG" id="COG0093">
    <property type="taxonomic scope" value="Bacteria"/>
</dbReference>
<dbReference type="HOGENOM" id="CLU_095071_2_1_5"/>
<dbReference type="Proteomes" id="UP000000245">
    <property type="component" value="Chromosome"/>
</dbReference>
<dbReference type="GO" id="GO:0022625">
    <property type="term" value="C:cytosolic large ribosomal subunit"/>
    <property type="evidence" value="ECO:0007669"/>
    <property type="project" value="TreeGrafter"/>
</dbReference>
<dbReference type="GO" id="GO:0070180">
    <property type="term" value="F:large ribosomal subunit rRNA binding"/>
    <property type="evidence" value="ECO:0007669"/>
    <property type="project" value="TreeGrafter"/>
</dbReference>
<dbReference type="GO" id="GO:0003735">
    <property type="term" value="F:structural constituent of ribosome"/>
    <property type="evidence" value="ECO:0007669"/>
    <property type="project" value="InterPro"/>
</dbReference>
<dbReference type="GO" id="GO:0006412">
    <property type="term" value="P:translation"/>
    <property type="evidence" value="ECO:0007669"/>
    <property type="project" value="UniProtKB-UniRule"/>
</dbReference>
<dbReference type="CDD" id="cd00337">
    <property type="entry name" value="Ribosomal_uL14"/>
    <property type="match status" value="1"/>
</dbReference>
<dbReference type="FunFam" id="2.40.150.20:FF:000001">
    <property type="entry name" value="50S ribosomal protein L14"/>
    <property type="match status" value="1"/>
</dbReference>
<dbReference type="Gene3D" id="2.40.150.20">
    <property type="entry name" value="Ribosomal protein L14"/>
    <property type="match status" value="1"/>
</dbReference>
<dbReference type="HAMAP" id="MF_01367">
    <property type="entry name" value="Ribosomal_uL14"/>
    <property type="match status" value="1"/>
</dbReference>
<dbReference type="InterPro" id="IPR000218">
    <property type="entry name" value="Ribosomal_uL14"/>
</dbReference>
<dbReference type="InterPro" id="IPR005745">
    <property type="entry name" value="Ribosomal_uL14_bac-type"/>
</dbReference>
<dbReference type="InterPro" id="IPR019972">
    <property type="entry name" value="Ribosomal_uL14_CS"/>
</dbReference>
<dbReference type="InterPro" id="IPR036853">
    <property type="entry name" value="Ribosomal_uL14_sf"/>
</dbReference>
<dbReference type="NCBIfam" id="TIGR01067">
    <property type="entry name" value="rplN_bact"/>
    <property type="match status" value="1"/>
</dbReference>
<dbReference type="PANTHER" id="PTHR11761">
    <property type="entry name" value="50S/60S RIBOSOMAL PROTEIN L14/L23"/>
    <property type="match status" value="1"/>
</dbReference>
<dbReference type="PANTHER" id="PTHR11761:SF3">
    <property type="entry name" value="LARGE RIBOSOMAL SUBUNIT PROTEIN UL14M"/>
    <property type="match status" value="1"/>
</dbReference>
<dbReference type="Pfam" id="PF00238">
    <property type="entry name" value="Ribosomal_L14"/>
    <property type="match status" value="1"/>
</dbReference>
<dbReference type="SMART" id="SM01374">
    <property type="entry name" value="Ribosomal_L14"/>
    <property type="match status" value="1"/>
</dbReference>
<dbReference type="SUPFAM" id="SSF50193">
    <property type="entry name" value="Ribosomal protein L14"/>
    <property type="match status" value="1"/>
</dbReference>
<dbReference type="PROSITE" id="PS00049">
    <property type="entry name" value="RIBOSOMAL_L14"/>
    <property type="match status" value="1"/>
</dbReference>
<proteinExistence type="inferred from homology"/>
<feature type="chain" id="PRO_1000055498" description="Large ribosomal subunit protein uL14">
    <location>
        <begin position="1"/>
        <end position="122"/>
    </location>
</feature>